<dbReference type="EC" id="2.3.1.180" evidence="1"/>
<dbReference type="EMBL" id="CP000529">
    <property type="protein sequence ID" value="ABM38375.1"/>
    <property type="molecule type" value="Genomic_DNA"/>
</dbReference>
<dbReference type="RefSeq" id="WP_011802447.1">
    <property type="nucleotide sequence ID" value="NC_008781.1"/>
</dbReference>
<dbReference type="SMR" id="A1VRU7"/>
<dbReference type="STRING" id="365044.Pnap_3076"/>
<dbReference type="KEGG" id="pna:Pnap_3076"/>
<dbReference type="eggNOG" id="COG0332">
    <property type="taxonomic scope" value="Bacteria"/>
</dbReference>
<dbReference type="HOGENOM" id="CLU_039592_4_1_4"/>
<dbReference type="OrthoDB" id="9815506at2"/>
<dbReference type="UniPathway" id="UPA00094"/>
<dbReference type="Proteomes" id="UP000000644">
    <property type="component" value="Chromosome"/>
</dbReference>
<dbReference type="GO" id="GO:0005737">
    <property type="term" value="C:cytoplasm"/>
    <property type="evidence" value="ECO:0007669"/>
    <property type="project" value="UniProtKB-SubCell"/>
</dbReference>
<dbReference type="GO" id="GO:0004315">
    <property type="term" value="F:3-oxoacyl-[acyl-carrier-protein] synthase activity"/>
    <property type="evidence" value="ECO:0007669"/>
    <property type="project" value="InterPro"/>
</dbReference>
<dbReference type="GO" id="GO:0033818">
    <property type="term" value="F:beta-ketoacyl-acyl-carrier-protein synthase III activity"/>
    <property type="evidence" value="ECO:0007669"/>
    <property type="project" value="UniProtKB-UniRule"/>
</dbReference>
<dbReference type="GO" id="GO:0006633">
    <property type="term" value="P:fatty acid biosynthetic process"/>
    <property type="evidence" value="ECO:0007669"/>
    <property type="project" value="UniProtKB-UniRule"/>
</dbReference>
<dbReference type="GO" id="GO:0044550">
    <property type="term" value="P:secondary metabolite biosynthetic process"/>
    <property type="evidence" value="ECO:0007669"/>
    <property type="project" value="TreeGrafter"/>
</dbReference>
<dbReference type="CDD" id="cd00830">
    <property type="entry name" value="KAS_III"/>
    <property type="match status" value="1"/>
</dbReference>
<dbReference type="FunFam" id="3.40.47.10:FF:000004">
    <property type="entry name" value="3-oxoacyl-[acyl-carrier-protein] synthase 3"/>
    <property type="match status" value="1"/>
</dbReference>
<dbReference type="Gene3D" id="3.40.47.10">
    <property type="match status" value="1"/>
</dbReference>
<dbReference type="HAMAP" id="MF_01815">
    <property type="entry name" value="FabH"/>
    <property type="match status" value="1"/>
</dbReference>
<dbReference type="InterPro" id="IPR013747">
    <property type="entry name" value="ACP_syn_III_C"/>
</dbReference>
<dbReference type="InterPro" id="IPR013751">
    <property type="entry name" value="ACP_syn_III_N"/>
</dbReference>
<dbReference type="InterPro" id="IPR004655">
    <property type="entry name" value="FabH"/>
</dbReference>
<dbReference type="InterPro" id="IPR016039">
    <property type="entry name" value="Thiolase-like"/>
</dbReference>
<dbReference type="NCBIfam" id="TIGR00747">
    <property type="entry name" value="fabH"/>
    <property type="match status" value="1"/>
</dbReference>
<dbReference type="NCBIfam" id="NF006829">
    <property type="entry name" value="PRK09352.1"/>
    <property type="match status" value="1"/>
</dbReference>
<dbReference type="PANTHER" id="PTHR34069">
    <property type="entry name" value="3-OXOACYL-[ACYL-CARRIER-PROTEIN] SYNTHASE 3"/>
    <property type="match status" value="1"/>
</dbReference>
<dbReference type="PANTHER" id="PTHR34069:SF2">
    <property type="entry name" value="BETA-KETOACYL-[ACYL-CARRIER-PROTEIN] SYNTHASE III"/>
    <property type="match status" value="1"/>
</dbReference>
<dbReference type="Pfam" id="PF08545">
    <property type="entry name" value="ACP_syn_III"/>
    <property type="match status" value="1"/>
</dbReference>
<dbReference type="Pfam" id="PF08541">
    <property type="entry name" value="ACP_syn_III_C"/>
    <property type="match status" value="1"/>
</dbReference>
<dbReference type="SUPFAM" id="SSF53901">
    <property type="entry name" value="Thiolase-like"/>
    <property type="match status" value="1"/>
</dbReference>
<comment type="function">
    <text evidence="1">Catalyzes the condensation reaction of fatty acid synthesis by the addition to an acyl acceptor of two carbons from malonyl-ACP. Catalyzes the first condensation reaction which initiates fatty acid synthesis and may therefore play a role in governing the total rate of fatty acid production. Possesses both acetoacetyl-ACP synthase and acetyl transacylase activities. Its substrate specificity determines the biosynthesis of branched-chain and/or straight-chain of fatty acids.</text>
</comment>
<comment type="catalytic activity">
    <reaction evidence="1">
        <text>malonyl-[ACP] + acetyl-CoA + H(+) = 3-oxobutanoyl-[ACP] + CO2 + CoA</text>
        <dbReference type="Rhea" id="RHEA:12080"/>
        <dbReference type="Rhea" id="RHEA-COMP:9623"/>
        <dbReference type="Rhea" id="RHEA-COMP:9625"/>
        <dbReference type="ChEBI" id="CHEBI:15378"/>
        <dbReference type="ChEBI" id="CHEBI:16526"/>
        <dbReference type="ChEBI" id="CHEBI:57287"/>
        <dbReference type="ChEBI" id="CHEBI:57288"/>
        <dbReference type="ChEBI" id="CHEBI:78449"/>
        <dbReference type="ChEBI" id="CHEBI:78450"/>
        <dbReference type="EC" id="2.3.1.180"/>
    </reaction>
</comment>
<comment type="pathway">
    <text evidence="1">Lipid metabolism; fatty acid biosynthesis.</text>
</comment>
<comment type="subunit">
    <text evidence="1">Homodimer.</text>
</comment>
<comment type="subcellular location">
    <subcellularLocation>
        <location evidence="1">Cytoplasm</location>
    </subcellularLocation>
</comment>
<comment type="domain">
    <text evidence="1">The last Arg residue of the ACP-binding site is essential for the weak association between ACP/AcpP and FabH.</text>
</comment>
<comment type="similarity">
    <text evidence="1">Belongs to the thiolase-like superfamily. FabH family.</text>
</comment>
<organism>
    <name type="scientific">Polaromonas naphthalenivorans (strain CJ2)</name>
    <dbReference type="NCBI Taxonomy" id="365044"/>
    <lineage>
        <taxon>Bacteria</taxon>
        <taxon>Pseudomonadati</taxon>
        <taxon>Pseudomonadota</taxon>
        <taxon>Betaproteobacteria</taxon>
        <taxon>Burkholderiales</taxon>
        <taxon>Comamonadaceae</taxon>
        <taxon>Polaromonas</taxon>
    </lineage>
</organism>
<protein>
    <recommendedName>
        <fullName evidence="1">Beta-ketoacyl-[acyl-carrier-protein] synthase III</fullName>
        <shortName evidence="1">Beta-ketoacyl-ACP synthase III</shortName>
        <shortName evidence="1">KAS III</shortName>
        <ecNumber evidence="1">2.3.1.180</ecNumber>
    </recommendedName>
    <alternativeName>
        <fullName evidence="1">3-oxoacyl-[acyl-carrier-protein] synthase 3</fullName>
    </alternativeName>
    <alternativeName>
        <fullName evidence="1">3-oxoacyl-[acyl-carrier-protein] synthase III</fullName>
    </alternativeName>
</protein>
<keyword id="KW-0012">Acyltransferase</keyword>
<keyword id="KW-0963">Cytoplasm</keyword>
<keyword id="KW-0275">Fatty acid biosynthesis</keyword>
<keyword id="KW-0276">Fatty acid metabolism</keyword>
<keyword id="KW-0444">Lipid biosynthesis</keyword>
<keyword id="KW-0443">Lipid metabolism</keyword>
<keyword id="KW-0511">Multifunctional enzyme</keyword>
<keyword id="KW-1185">Reference proteome</keyword>
<keyword id="KW-0808">Transferase</keyword>
<name>FABH_POLNA</name>
<feature type="chain" id="PRO_1000070236" description="Beta-ketoacyl-[acyl-carrier-protein] synthase III">
    <location>
        <begin position="1"/>
        <end position="325"/>
    </location>
</feature>
<feature type="region of interest" description="ACP-binding" evidence="1">
    <location>
        <begin position="253"/>
        <end position="257"/>
    </location>
</feature>
<feature type="active site" evidence="1">
    <location>
        <position position="119"/>
    </location>
</feature>
<feature type="active site" evidence="1">
    <location>
        <position position="252"/>
    </location>
</feature>
<feature type="active site" evidence="1">
    <location>
        <position position="282"/>
    </location>
</feature>
<accession>A1VRU7</accession>
<gene>
    <name evidence="1" type="primary">fabH</name>
    <name type="ordered locus">Pnap_3076</name>
</gene>
<sequence>MTRYSRITGTGSYLPPNRLTNAQLAAELAVKGVETSDEWIVERTGIKARHFAAPDVTSSDLGLEAAKRAIEAAGLQAADIDLIIVATSTPDMVFPSVACILQHKLGIAGCPAFDLQAVCSGFVYALTVADAMIKSGAASKALVIGAEVFSRILDFSDRTTCVLFGDGAGAVVLEASETPGILASDLHADGKHVGILCVPGHVSGGQVLGSPLLTMDGKAVFKLAVGVLESAARATLAKAGLLETDIDWLIPHQANLRIMHSTAKKLKLPLEKLIVTVDEHGNTSAASIPLALDEAVRSGKVKKGDILMLEGVGGGFTWGAVLLKY</sequence>
<evidence type="ECO:0000255" key="1">
    <source>
        <dbReference type="HAMAP-Rule" id="MF_01815"/>
    </source>
</evidence>
<reference key="1">
    <citation type="journal article" date="2009" name="Environ. Microbiol.">
        <title>The genome of Polaromonas naphthalenivorans strain CJ2, isolated from coal tar-contaminated sediment, reveals physiological and metabolic versatility and evolution through extensive horizontal gene transfer.</title>
        <authorList>
            <person name="Yagi J.M."/>
            <person name="Sims D."/>
            <person name="Brettin T."/>
            <person name="Bruce D."/>
            <person name="Madsen E.L."/>
        </authorList>
    </citation>
    <scope>NUCLEOTIDE SEQUENCE [LARGE SCALE GENOMIC DNA]</scope>
    <source>
        <strain>CJ2</strain>
    </source>
</reference>
<proteinExistence type="inferred from homology"/>